<dbReference type="EC" id="6.3.4.20" evidence="1"/>
<dbReference type="EMBL" id="CP000356">
    <property type="protein sequence ID" value="ABF54348.1"/>
    <property type="molecule type" value="Genomic_DNA"/>
</dbReference>
<dbReference type="SMR" id="Q1GPS4"/>
<dbReference type="STRING" id="317655.Sala_2643"/>
<dbReference type="KEGG" id="sal:Sala_2643"/>
<dbReference type="eggNOG" id="COG0603">
    <property type="taxonomic scope" value="Bacteria"/>
</dbReference>
<dbReference type="HOGENOM" id="CLU_081854_0_0_5"/>
<dbReference type="OrthoDB" id="9789567at2"/>
<dbReference type="UniPathway" id="UPA00391"/>
<dbReference type="Proteomes" id="UP000006578">
    <property type="component" value="Chromosome"/>
</dbReference>
<dbReference type="GO" id="GO:0005524">
    <property type="term" value="F:ATP binding"/>
    <property type="evidence" value="ECO:0007669"/>
    <property type="project" value="UniProtKB-UniRule"/>
</dbReference>
<dbReference type="GO" id="GO:0016879">
    <property type="term" value="F:ligase activity, forming carbon-nitrogen bonds"/>
    <property type="evidence" value="ECO:0007669"/>
    <property type="project" value="UniProtKB-UniRule"/>
</dbReference>
<dbReference type="GO" id="GO:0008270">
    <property type="term" value="F:zinc ion binding"/>
    <property type="evidence" value="ECO:0007669"/>
    <property type="project" value="UniProtKB-UniRule"/>
</dbReference>
<dbReference type="GO" id="GO:0008616">
    <property type="term" value="P:queuosine biosynthetic process"/>
    <property type="evidence" value="ECO:0007669"/>
    <property type="project" value="UniProtKB-UniRule"/>
</dbReference>
<dbReference type="CDD" id="cd01995">
    <property type="entry name" value="QueC-like"/>
    <property type="match status" value="1"/>
</dbReference>
<dbReference type="Gene3D" id="3.40.50.620">
    <property type="entry name" value="HUPs"/>
    <property type="match status" value="1"/>
</dbReference>
<dbReference type="HAMAP" id="MF_01633">
    <property type="entry name" value="QueC"/>
    <property type="match status" value="1"/>
</dbReference>
<dbReference type="InterPro" id="IPR018317">
    <property type="entry name" value="QueC"/>
</dbReference>
<dbReference type="InterPro" id="IPR014729">
    <property type="entry name" value="Rossmann-like_a/b/a_fold"/>
</dbReference>
<dbReference type="NCBIfam" id="TIGR00364">
    <property type="entry name" value="7-cyano-7-deazaguanine synthase QueC"/>
    <property type="match status" value="1"/>
</dbReference>
<dbReference type="PANTHER" id="PTHR42914">
    <property type="entry name" value="7-CYANO-7-DEAZAGUANINE SYNTHASE"/>
    <property type="match status" value="1"/>
</dbReference>
<dbReference type="PANTHER" id="PTHR42914:SF1">
    <property type="entry name" value="7-CYANO-7-DEAZAGUANINE SYNTHASE"/>
    <property type="match status" value="1"/>
</dbReference>
<dbReference type="Pfam" id="PF06508">
    <property type="entry name" value="QueC"/>
    <property type="match status" value="1"/>
</dbReference>
<dbReference type="PIRSF" id="PIRSF006293">
    <property type="entry name" value="ExsB"/>
    <property type="match status" value="1"/>
</dbReference>
<dbReference type="SUPFAM" id="SSF52402">
    <property type="entry name" value="Adenine nucleotide alpha hydrolases-like"/>
    <property type="match status" value="1"/>
</dbReference>
<protein>
    <recommendedName>
        <fullName evidence="1">7-cyano-7-deazaguanine synthase 2</fullName>
        <ecNumber evidence="1">6.3.4.20</ecNumber>
    </recommendedName>
    <alternativeName>
        <fullName evidence="1">7-cyano-7-carbaguanine synthase 2</fullName>
    </alternativeName>
    <alternativeName>
        <fullName evidence="1">PreQ(0) synthase 2</fullName>
    </alternativeName>
    <alternativeName>
        <fullName evidence="1">Queuosine biosynthesis protein QueC 2</fullName>
    </alternativeName>
</protein>
<feature type="chain" id="PRO_0000255929" description="7-cyano-7-deazaguanine synthase 2">
    <location>
        <begin position="1"/>
        <end position="236"/>
    </location>
</feature>
<feature type="binding site" evidence="1">
    <location>
        <begin position="11"/>
        <end position="21"/>
    </location>
    <ligand>
        <name>ATP</name>
        <dbReference type="ChEBI" id="CHEBI:30616"/>
    </ligand>
</feature>
<feature type="binding site" evidence="1">
    <location>
        <position position="199"/>
    </location>
    <ligand>
        <name>Zn(2+)</name>
        <dbReference type="ChEBI" id="CHEBI:29105"/>
    </ligand>
</feature>
<feature type="binding site" evidence="1">
    <location>
        <position position="214"/>
    </location>
    <ligand>
        <name>Zn(2+)</name>
        <dbReference type="ChEBI" id="CHEBI:29105"/>
    </ligand>
</feature>
<feature type="binding site" evidence="1">
    <location>
        <position position="217"/>
    </location>
    <ligand>
        <name>Zn(2+)</name>
        <dbReference type="ChEBI" id="CHEBI:29105"/>
    </ligand>
</feature>
<feature type="binding site" evidence="1">
    <location>
        <position position="220"/>
    </location>
    <ligand>
        <name>Zn(2+)</name>
        <dbReference type="ChEBI" id="CHEBI:29105"/>
    </ligand>
</feature>
<evidence type="ECO:0000255" key="1">
    <source>
        <dbReference type="HAMAP-Rule" id="MF_01633"/>
    </source>
</evidence>
<accession>Q1GPS4</accession>
<proteinExistence type="inferred from homology"/>
<gene>
    <name evidence="1" type="primary">queC2</name>
    <name type="ordered locus">Sala_2643</name>
</gene>
<reference key="1">
    <citation type="journal article" date="2009" name="Proc. Natl. Acad. Sci. U.S.A.">
        <title>The genomic basis of trophic strategy in marine bacteria.</title>
        <authorList>
            <person name="Lauro F.M."/>
            <person name="McDougald D."/>
            <person name="Thomas T."/>
            <person name="Williams T.J."/>
            <person name="Egan S."/>
            <person name="Rice S."/>
            <person name="DeMaere M.Z."/>
            <person name="Ting L."/>
            <person name="Ertan H."/>
            <person name="Johnson J."/>
            <person name="Ferriera S."/>
            <person name="Lapidus A."/>
            <person name="Anderson I."/>
            <person name="Kyrpides N."/>
            <person name="Munk A.C."/>
            <person name="Detter C."/>
            <person name="Han C.S."/>
            <person name="Brown M.V."/>
            <person name="Robb F.T."/>
            <person name="Kjelleberg S."/>
            <person name="Cavicchioli R."/>
        </authorList>
    </citation>
    <scope>NUCLEOTIDE SEQUENCE [LARGE SCALE GENOMIC DNA]</scope>
    <source>
        <strain>DSM 13593 / LMG 18877 / RB2256</strain>
    </source>
</reference>
<sequence length="236" mass="26141">MTGDAGALVLFSGGQDSATCLAWALDRFETVETVGFDYGQRHRVELECRDDFRARIVELNPAWAARLGPDHKLDLSVLGQVSETALTRDAEIALRADGLPNTFVPGRNLLFFTLAAALASRRELRHLVGGMCETDYSGYPDCRDDTLKSLQVTLNLGIGSRSVVHTPLMWLDKAQTWGLAKILGGEKLVDLIRTGTHTCYRGDHDRLQDWGYGCGTCPACELRMKGWQEHRSSLDE</sequence>
<name>QUEC2_SPHAL</name>
<comment type="function">
    <text evidence="1">Catalyzes the ATP-dependent conversion of 7-carboxy-7-deazaguanine (CDG) to 7-cyano-7-deazaguanine (preQ(0)).</text>
</comment>
<comment type="catalytic activity">
    <reaction evidence="1">
        <text>7-carboxy-7-deazaguanine + NH4(+) + ATP = 7-cyano-7-deazaguanine + ADP + phosphate + H2O + H(+)</text>
        <dbReference type="Rhea" id="RHEA:27982"/>
        <dbReference type="ChEBI" id="CHEBI:15377"/>
        <dbReference type="ChEBI" id="CHEBI:15378"/>
        <dbReference type="ChEBI" id="CHEBI:28938"/>
        <dbReference type="ChEBI" id="CHEBI:30616"/>
        <dbReference type="ChEBI" id="CHEBI:43474"/>
        <dbReference type="ChEBI" id="CHEBI:45075"/>
        <dbReference type="ChEBI" id="CHEBI:61036"/>
        <dbReference type="ChEBI" id="CHEBI:456216"/>
        <dbReference type="EC" id="6.3.4.20"/>
    </reaction>
</comment>
<comment type="cofactor">
    <cofactor evidence="1">
        <name>Zn(2+)</name>
        <dbReference type="ChEBI" id="CHEBI:29105"/>
    </cofactor>
    <text evidence="1">Binds 1 zinc ion per subunit.</text>
</comment>
<comment type="pathway">
    <text evidence="1">Purine metabolism; 7-cyano-7-deazaguanine biosynthesis.</text>
</comment>
<comment type="similarity">
    <text evidence="1">Belongs to the QueC family.</text>
</comment>
<keyword id="KW-0067">ATP-binding</keyword>
<keyword id="KW-0436">Ligase</keyword>
<keyword id="KW-0479">Metal-binding</keyword>
<keyword id="KW-0547">Nucleotide-binding</keyword>
<keyword id="KW-0671">Queuosine biosynthesis</keyword>
<keyword id="KW-1185">Reference proteome</keyword>
<keyword id="KW-0862">Zinc</keyword>
<organism>
    <name type="scientific">Sphingopyxis alaskensis (strain DSM 13593 / LMG 18877 / RB2256)</name>
    <name type="common">Sphingomonas alaskensis</name>
    <dbReference type="NCBI Taxonomy" id="317655"/>
    <lineage>
        <taxon>Bacteria</taxon>
        <taxon>Pseudomonadati</taxon>
        <taxon>Pseudomonadota</taxon>
        <taxon>Alphaproteobacteria</taxon>
        <taxon>Sphingomonadales</taxon>
        <taxon>Sphingomonadaceae</taxon>
        <taxon>Sphingopyxis</taxon>
    </lineage>
</organism>